<organism>
    <name type="scientific">Ralstonia pickettii (strain 12J)</name>
    <dbReference type="NCBI Taxonomy" id="402626"/>
    <lineage>
        <taxon>Bacteria</taxon>
        <taxon>Pseudomonadati</taxon>
        <taxon>Pseudomonadota</taxon>
        <taxon>Betaproteobacteria</taxon>
        <taxon>Burkholderiales</taxon>
        <taxon>Burkholderiaceae</taxon>
        <taxon>Ralstonia</taxon>
    </lineage>
</organism>
<name>RLME_RALPJ</name>
<feature type="chain" id="PRO_1000195008" description="Ribosomal RNA large subunit methyltransferase E">
    <location>
        <begin position="1"/>
        <end position="221"/>
    </location>
</feature>
<feature type="region of interest" description="Disordered" evidence="2">
    <location>
        <begin position="199"/>
        <end position="221"/>
    </location>
</feature>
<feature type="active site" description="Proton acceptor" evidence="1">
    <location>
        <position position="174"/>
    </location>
</feature>
<feature type="binding site" evidence="1">
    <location>
        <position position="60"/>
    </location>
    <ligand>
        <name>S-adenosyl-L-methionine</name>
        <dbReference type="ChEBI" id="CHEBI:59789"/>
    </ligand>
</feature>
<feature type="binding site" evidence="1">
    <location>
        <position position="62"/>
    </location>
    <ligand>
        <name>S-adenosyl-L-methionine</name>
        <dbReference type="ChEBI" id="CHEBI:59789"/>
    </ligand>
</feature>
<feature type="binding site" evidence="1">
    <location>
        <position position="89"/>
    </location>
    <ligand>
        <name>S-adenosyl-L-methionine</name>
        <dbReference type="ChEBI" id="CHEBI:59789"/>
    </ligand>
</feature>
<feature type="binding site" evidence="1">
    <location>
        <position position="105"/>
    </location>
    <ligand>
        <name>S-adenosyl-L-methionine</name>
        <dbReference type="ChEBI" id="CHEBI:59789"/>
    </ligand>
</feature>
<feature type="binding site" evidence="1">
    <location>
        <position position="134"/>
    </location>
    <ligand>
        <name>S-adenosyl-L-methionine</name>
        <dbReference type="ChEBI" id="CHEBI:59789"/>
    </ligand>
</feature>
<protein>
    <recommendedName>
        <fullName evidence="1">Ribosomal RNA large subunit methyltransferase E</fullName>
        <ecNumber evidence="1">2.1.1.166</ecNumber>
    </recommendedName>
    <alternativeName>
        <fullName evidence="1">23S rRNA Um2552 methyltransferase</fullName>
    </alternativeName>
    <alternativeName>
        <fullName evidence="1">rRNA (uridine-2'-O-)-methyltransferase</fullName>
    </alternativeName>
</protein>
<proteinExistence type="inferred from homology"/>
<keyword id="KW-0963">Cytoplasm</keyword>
<keyword id="KW-0489">Methyltransferase</keyword>
<keyword id="KW-0698">rRNA processing</keyword>
<keyword id="KW-0949">S-adenosyl-L-methionine</keyword>
<keyword id="KW-0808">Transferase</keyword>
<gene>
    <name evidence="1" type="primary">rlmE</name>
    <name evidence="1" type="synonym">ftsJ</name>
    <name evidence="1" type="synonym">rrmJ</name>
    <name type="ordered locus">Rpic_2030</name>
</gene>
<sequence length="221" mass="24506">MAKNKFNQSWLHDHINDPYVKLAQREGYRARAAYKLKEIDEQDKLIKPGQVIVDLGAAPGSWSQYVRNKLAASPRAKDGRIDGAIVAIDILPMEAIADVTFIQGDFREDEVFRQLEEIVLEVSGGGKVDLVLSDMAPNLSGVASADAARMEHIAELAVEFAMAHLKPEGALLIKCFHGSGYSQIVEMFKRHFKIVAPRKPKASRDKSSETFLLGRQLKHPG</sequence>
<comment type="function">
    <text evidence="1">Specifically methylates the uridine in position 2552 of 23S rRNA at the 2'-O position of the ribose in the fully assembled 50S ribosomal subunit.</text>
</comment>
<comment type="catalytic activity">
    <reaction evidence="1">
        <text>uridine(2552) in 23S rRNA + S-adenosyl-L-methionine = 2'-O-methyluridine(2552) in 23S rRNA + S-adenosyl-L-homocysteine + H(+)</text>
        <dbReference type="Rhea" id="RHEA:42720"/>
        <dbReference type="Rhea" id="RHEA-COMP:10202"/>
        <dbReference type="Rhea" id="RHEA-COMP:10203"/>
        <dbReference type="ChEBI" id="CHEBI:15378"/>
        <dbReference type="ChEBI" id="CHEBI:57856"/>
        <dbReference type="ChEBI" id="CHEBI:59789"/>
        <dbReference type="ChEBI" id="CHEBI:65315"/>
        <dbReference type="ChEBI" id="CHEBI:74478"/>
        <dbReference type="EC" id="2.1.1.166"/>
    </reaction>
</comment>
<comment type="subcellular location">
    <subcellularLocation>
        <location evidence="1">Cytoplasm</location>
    </subcellularLocation>
</comment>
<comment type="similarity">
    <text evidence="1">Belongs to the class I-like SAM-binding methyltransferase superfamily. RNA methyltransferase RlmE family.</text>
</comment>
<accession>B2UGQ0</accession>
<evidence type="ECO:0000255" key="1">
    <source>
        <dbReference type="HAMAP-Rule" id="MF_01547"/>
    </source>
</evidence>
<evidence type="ECO:0000256" key="2">
    <source>
        <dbReference type="SAM" id="MobiDB-lite"/>
    </source>
</evidence>
<reference key="1">
    <citation type="submission" date="2008-05" db="EMBL/GenBank/DDBJ databases">
        <title>Complete sequence of chromosome 1 of Ralstonia pickettii 12J.</title>
        <authorList>
            <person name="Lucas S."/>
            <person name="Copeland A."/>
            <person name="Lapidus A."/>
            <person name="Glavina del Rio T."/>
            <person name="Dalin E."/>
            <person name="Tice H."/>
            <person name="Bruce D."/>
            <person name="Goodwin L."/>
            <person name="Pitluck S."/>
            <person name="Meincke L."/>
            <person name="Brettin T."/>
            <person name="Detter J.C."/>
            <person name="Han C."/>
            <person name="Kuske C.R."/>
            <person name="Schmutz J."/>
            <person name="Larimer F."/>
            <person name="Land M."/>
            <person name="Hauser L."/>
            <person name="Kyrpides N."/>
            <person name="Mikhailova N."/>
            <person name="Marsh T."/>
            <person name="Richardson P."/>
        </authorList>
    </citation>
    <scope>NUCLEOTIDE SEQUENCE [LARGE SCALE GENOMIC DNA]</scope>
    <source>
        <strain>12J</strain>
    </source>
</reference>
<dbReference type="EC" id="2.1.1.166" evidence="1"/>
<dbReference type="EMBL" id="CP001068">
    <property type="protein sequence ID" value="ACD27164.1"/>
    <property type="molecule type" value="Genomic_DNA"/>
</dbReference>
<dbReference type="SMR" id="B2UGQ0"/>
<dbReference type="STRING" id="402626.Rpic_2030"/>
<dbReference type="KEGG" id="rpi:Rpic_2030"/>
<dbReference type="PATRIC" id="fig|402626.5.peg.3181"/>
<dbReference type="eggNOG" id="COG0293">
    <property type="taxonomic scope" value="Bacteria"/>
</dbReference>
<dbReference type="HOGENOM" id="CLU_009422_4_1_4"/>
<dbReference type="GO" id="GO:0005737">
    <property type="term" value="C:cytoplasm"/>
    <property type="evidence" value="ECO:0007669"/>
    <property type="project" value="UniProtKB-SubCell"/>
</dbReference>
<dbReference type="GO" id="GO:0008650">
    <property type="term" value="F:rRNA (uridine-2'-O-)-methyltransferase activity"/>
    <property type="evidence" value="ECO:0007669"/>
    <property type="project" value="UniProtKB-UniRule"/>
</dbReference>
<dbReference type="FunFam" id="3.40.50.150:FF:000005">
    <property type="entry name" value="Ribosomal RNA large subunit methyltransferase E"/>
    <property type="match status" value="1"/>
</dbReference>
<dbReference type="Gene3D" id="3.40.50.150">
    <property type="entry name" value="Vaccinia Virus protein VP39"/>
    <property type="match status" value="1"/>
</dbReference>
<dbReference type="HAMAP" id="MF_01547">
    <property type="entry name" value="RNA_methyltr_E"/>
    <property type="match status" value="1"/>
</dbReference>
<dbReference type="InterPro" id="IPR050082">
    <property type="entry name" value="RNA_methyltr_RlmE"/>
</dbReference>
<dbReference type="InterPro" id="IPR002877">
    <property type="entry name" value="RNA_MeTrfase_FtsJ_dom"/>
</dbReference>
<dbReference type="InterPro" id="IPR015507">
    <property type="entry name" value="rRNA-MeTfrase_E"/>
</dbReference>
<dbReference type="InterPro" id="IPR029063">
    <property type="entry name" value="SAM-dependent_MTases_sf"/>
</dbReference>
<dbReference type="PANTHER" id="PTHR10920">
    <property type="entry name" value="RIBOSOMAL RNA METHYLTRANSFERASE"/>
    <property type="match status" value="1"/>
</dbReference>
<dbReference type="PANTHER" id="PTHR10920:SF18">
    <property type="entry name" value="RRNA METHYLTRANSFERASE 2, MITOCHONDRIAL"/>
    <property type="match status" value="1"/>
</dbReference>
<dbReference type="Pfam" id="PF01728">
    <property type="entry name" value="FtsJ"/>
    <property type="match status" value="1"/>
</dbReference>
<dbReference type="PIRSF" id="PIRSF005461">
    <property type="entry name" value="23S_rRNA_mtase"/>
    <property type="match status" value="1"/>
</dbReference>
<dbReference type="SUPFAM" id="SSF53335">
    <property type="entry name" value="S-adenosyl-L-methionine-dependent methyltransferases"/>
    <property type="match status" value="1"/>
</dbReference>